<dbReference type="EMBL" id="AE000512">
    <property type="protein sequence ID" value="AAD36694.1"/>
    <property type="molecule type" value="Genomic_DNA"/>
</dbReference>
<dbReference type="PIR" id="C72229">
    <property type="entry name" value="C72229"/>
</dbReference>
<dbReference type="RefSeq" id="NP_229427.1">
    <property type="nucleotide sequence ID" value="NC_000853.1"/>
</dbReference>
<dbReference type="RefSeq" id="WP_004082103.1">
    <property type="nucleotide sequence ID" value="NC_000853.1"/>
</dbReference>
<dbReference type="SMR" id="Q9X1W2"/>
<dbReference type="FunCoup" id="Q9X1W2">
    <property type="interactions" value="271"/>
</dbReference>
<dbReference type="STRING" id="243274.TM_1627"/>
<dbReference type="PaxDb" id="243274-THEMA_06110"/>
<dbReference type="EnsemblBacteria" id="AAD36694">
    <property type="protein sequence ID" value="AAD36694"/>
    <property type="gene ID" value="TM_1627"/>
</dbReference>
<dbReference type="KEGG" id="tma:TM1627"/>
<dbReference type="KEGG" id="tmi:THEMA_06110"/>
<dbReference type="KEGG" id="tmm:Tmari_1636"/>
<dbReference type="KEGG" id="tmw:THMA_1668"/>
<dbReference type="eggNOG" id="COG1825">
    <property type="taxonomic scope" value="Bacteria"/>
</dbReference>
<dbReference type="InParanoid" id="Q9X1W2"/>
<dbReference type="OrthoDB" id="9790002at2"/>
<dbReference type="Proteomes" id="UP000008183">
    <property type="component" value="Chromosome"/>
</dbReference>
<dbReference type="GO" id="GO:0022625">
    <property type="term" value="C:cytosolic large ribosomal subunit"/>
    <property type="evidence" value="ECO:0000318"/>
    <property type="project" value="GO_Central"/>
</dbReference>
<dbReference type="GO" id="GO:0008097">
    <property type="term" value="F:5S rRNA binding"/>
    <property type="evidence" value="ECO:0000318"/>
    <property type="project" value="GO_Central"/>
</dbReference>
<dbReference type="GO" id="GO:0003735">
    <property type="term" value="F:structural constituent of ribosome"/>
    <property type="evidence" value="ECO:0007669"/>
    <property type="project" value="InterPro"/>
</dbReference>
<dbReference type="GO" id="GO:0006412">
    <property type="term" value="P:translation"/>
    <property type="evidence" value="ECO:0000318"/>
    <property type="project" value="GO_Central"/>
</dbReference>
<dbReference type="CDD" id="cd00495">
    <property type="entry name" value="Ribosomal_L25_TL5_CTC"/>
    <property type="match status" value="1"/>
</dbReference>
<dbReference type="FunFam" id="2.170.120.20:FF:000003">
    <property type="entry name" value="50S ribosomal protein L25"/>
    <property type="match status" value="1"/>
</dbReference>
<dbReference type="Gene3D" id="2.170.120.20">
    <property type="entry name" value="Ribosomal protein L25, beta domain"/>
    <property type="match status" value="1"/>
</dbReference>
<dbReference type="Gene3D" id="2.40.240.10">
    <property type="entry name" value="Ribosomal Protein L25, Chain P"/>
    <property type="match status" value="1"/>
</dbReference>
<dbReference type="HAMAP" id="MF_01334">
    <property type="entry name" value="Ribosomal_bL25_CTC"/>
    <property type="match status" value="1"/>
</dbReference>
<dbReference type="InterPro" id="IPR020056">
    <property type="entry name" value="Rbsml_bL25/Gln-tRNA_synth_N"/>
</dbReference>
<dbReference type="InterPro" id="IPR011035">
    <property type="entry name" value="Ribosomal_bL25/Gln-tRNA_synth"/>
</dbReference>
<dbReference type="InterPro" id="IPR020057">
    <property type="entry name" value="Ribosomal_bL25_b-dom"/>
</dbReference>
<dbReference type="InterPro" id="IPR037121">
    <property type="entry name" value="Ribosomal_bL25_C"/>
</dbReference>
<dbReference type="InterPro" id="IPR001021">
    <property type="entry name" value="Ribosomal_bL25_long"/>
</dbReference>
<dbReference type="InterPro" id="IPR029751">
    <property type="entry name" value="Ribosomal_L25_dom"/>
</dbReference>
<dbReference type="InterPro" id="IPR020930">
    <property type="entry name" value="Ribosomal_uL5_bac-type"/>
</dbReference>
<dbReference type="NCBIfam" id="TIGR00731">
    <property type="entry name" value="bL25_bact_ctc"/>
    <property type="match status" value="1"/>
</dbReference>
<dbReference type="PANTHER" id="PTHR33284">
    <property type="entry name" value="RIBOSOMAL PROTEIN L25/GLN-TRNA SYNTHETASE, ANTI-CODON-BINDING DOMAIN-CONTAINING PROTEIN"/>
    <property type="match status" value="1"/>
</dbReference>
<dbReference type="PANTHER" id="PTHR33284:SF1">
    <property type="entry name" value="RIBOSOMAL PROTEIN L25_GLN-TRNA SYNTHETASE, ANTI-CODON-BINDING DOMAIN-CONTAINING PROTEIN"/>
    <property type="match status" value="1"/>
</dbReference>
<dbReference type="Pfam" id="PF01386">
    <property type="entry name" value="Ribosomal_L25p"/>
    <property type="match status" value="1"/>
</dbReference>
<dbReference type="Pfam" id="PF14693">
    <property type="entry name" value="Ribosomal_TL5_C"/>
    <property type="match status" value="1"/>
</dbReference>
<dbReference type="SUPFAM" id="SSF50715">
    <property type="entry name" value="Ribosomal protein L25-like"/>
    <property type="match status" value="1"/>
</dbReference>
<name>RL25_THEMA</name>
<comment type="function">
    <text evidence="1">This is one of the proteins that binds to the 5S RNA in the ribosome where it forms part of the central protuberance.</text>
</comment>
<comment type="subunit">
    <text evidence="1">Part of the 50S ribosomal subunit; part of the 5S rRNA/L5/L18/L25 subcomplex. Contacts the 5S rRNA. Binds to the 5S rRNA independently of L5 and L18.</text>
</comment>
<comment type="similarity">
    <text evidence="1">Belongs to the bacterial ribosomal protein bL25 family. CTC subfamily.</text>
</comment>
<gene>
    <name evidence="1" type="primary">rplY</name>
    <name evidence="1" type="synonym">ctc</name>
    <name type="ordered locus">TM_1627</name>
</gene>
<reference key="1">
    <citation type="journal article" date="1999" name="Nature">
        <title>Evidence for lateral gene transfer between Archaea and Bacteria from genome sequence of Thermotoga maritima.</title>
        <authorList>
            <person name="Nelson K.E."/>
            <person name="Clayton R.A."/>
            <person name="Gill S.R."/>
            <person name="Gwinn M.L."/>
            <person name="Dodson R.J."/>
            <person name="Haft D.H."/>
            <person name="Hickey E.K."/>
            <person name="Peterson J.D."/>
            <person name="Nelson W.C."/>
            <person name="Ketchum K.A."/>
            <person name="McDonald L.A."/>
            <person name="Utterback T.R."/>
            <person name="Malek J.A."/>
            <person name="Linher K.D."/>
            <person name="Garrett M.M."/>
            <person name="Stewart A.M."/>
            <person name="Cotton M.D."/>
            <person name="Pratt M.S."/>
            <person name="Phillips C.A."/>
            <person name="Richardson D.L."/>
            <person name="Heidelberg J.F."/>
            <person name="Sutton G.G."/>
            <person name="Fleischmann R.D."/>
            <person name="Eisen J.A."/>
            <person name="White O."/>
            <person name="Salzberg S.L."/>
            <person name="Smith H.O."/>
            <person name="Venter J.C."/>
            <person name="Fraser C.M."/>
        </authorList>
    </citation>
    <scope>NUCLEOTIDE SEQUENCE [LARGE SCALE GENOMIC DNA]</scope>
    <source>
        <strain>ATCC 43589 / DSM 3109 / JCM 10099 / NBRC 100826 / MSB8</strain>
    </source>
</reference>
<feature type="chain" id="PRO_0000181606" description="Large ribosomal subunit protein bL25">
    <location>
        <begin position="1"/>
        <end position="215"/>
    </location>
</feature>
<feature type="region of interest" description="Disordered" evidence="2">
    <location>
        <begin position="192"/>
        <end position="215"/>
    </location>
</feature>
<feature type="compositionally biased region" description="Acidic residues" evidence="2">
    <location>
        <begin position="192"/>
        <end position="203"/>
    </location>
</feature>
<feature type="compositionally biased region" description="Basic and acidic residues" evidence="2">
    <location>
        <begin position="205"/>
        <end position="215"/>
    </location>
</feature>
<protein>
    <recommendedName>
        <fullName evidence="1">Large ribosomal subunit protein bL25</fullName>
    </recommendedName>
    <alternativeName>
        <fullName evidence="3">50S ribosomal protein L25</fullName>
    </alternativeName>
    <alternativeName>
        <fullName evidence="1">General stress protein CTC</fullName>
    </alternativeName>
</protein>
<organism>
    <name type="scientific">Thermotoga maritima (strain ATCC 43589 / DSM 3109 / JCM 10099 / NBRC 100826 / MSB8)</name>
    <dbReference type="NCBI Taxonomy" id="243274"/>
    <lineage>
        <taxon>Bacteria</taxon>
        <taxon>Thermotogati</taxon>
        <taxon>Thermotogota</taxon>
        <taxon>Thermotogae</taxon>
        <taxon>Thermotogales</taxon>
        <taxon>Thermotogaceae</taxon>
        <taxon>Thermotoga</taxon>
    </lineage>
</organism>
<sequence length="215" mass="24254">MVSLEARVREVKGKREARRLRRRGEVPAVVYGPATEPIPVKIKRSVLEKIFHTISEATPIQLIIKDDQGNTVAEKTVFLKMVQRDKVSETVVHLDFYEPTKGHRMRINVPLKVVGKPVGVEKGGFLEVFHEEIPVETDPDKVPQEIEVDVSSLDLGDVIHARDLKLPEGVKCLLEEEEAVVSVLVPKEVAIEEATEEEEEAAEPEVIKRKEEEEE</sequence>
<proteinExistence type="inferred from homology"/>
<evidence type="ECO:0000255" key="1">
    <source>
        <dbReference type="HAMAP-Rule" id="MF_01334"/>
    </source>
</evidence>
<evidence type="ECO:0000256" key="2">
    <source>
        <dbReference type="SAM" id="MobiDB-lite"/>
    </source>
</evidence>
<evidence type="ECO:0000305" key="3"/>
<accession>Q9X1W2</accession>
<keyword id="KW-1185">Reference proteome</keyword>
<keyword id="KW-0687">Ribonucleoprotein</keyword>
<keyword id="KW-0689">Ribosomal protein</keyword>
<keyword id="KW-0694">RNA-binding</keyword>
<keyword id="KW-0699">rRNA-binding</keyword>